<name>Y1415_PSEAB</name>
<comment type="similarity">
    <text evidence="2">Belongs to the UPF0213 family.</text>
</comment>
<sequence length="104" mass="11236">MSEATAATAAIGKCWSVYLVRAENGALYCGISDDPLRRFDTHCSGKGARFFHSSPARALVYVEACASKGDALRRERAIKALSKRAKERLLVGVPVLREVGEPAI</sequence>
<dbReference type="EMBL" id="CP000438">
    <property type="protein sequence ID" value="ABJ13121.1"/>
    <property type="molecule type" value="Genomic_DNA"/>
</dbReference>
<dbReference type="RefSeq" id="WP_003119275.1">
    <property type="nucleotide sequence ID" value="NZ_CP034244.1"/>
</dbReference>
<dbReference type="SMR" id="Q02S14"/>
<dbReference type="KEGG" id="pau:PA14_14150"/>
<dbReference type="PseudoCAP" id="PA14_14150"/>
<dbReference type="HOGENOM" id="CLU_135650_0_2_6"/>
<dbReference type="BioCyc" id="PAER208963:G1G74-1162-MONOMER"/>
<dbReference type="Proteomes" id="UP000000653">
    <property type="component" value="Chromosome"/>
</dbReference>
<dbReference type="CDD" id="cd10456">
    <property type="entry name" value="GIY-YIG_UPF0213"/>
    <property type="match status" value="1"/>
</dbReference>
<dbReference type="Gene3D" id="3.40.1440.10">
    <property type="entry name" value="GIY-YIG endonuclease"/>
    <property type="match status" value="1"/>
</dbReference>
<dbReference type="InterPro" id="IPR000305">
    <property type="entry name" value="GIY-YIG_endonuc"/>
</dbReference>
<dbReference type="InterPro" id="IPR035901">
    <property type="entry name" value="GIY-YIG_endonuc_sf"/>
</dbReference>
<dbReference type="InterPro" id="IPR050190">
    <property type="entry name" value="UPF0213_domain"/>
</dbReference>
<dbReference type="PANTHER" id="PTHR34477">
    <property type="entry name" value="UPF0213 PROTEIN YHBQ"/>
    <property type="match status" value="1"/>
</dbReference>
<dbReference type="PANTHER" id="PTHR34477:SF1">
    <property type="entry name" value="UPF0213 PROTEIN YHBQ"/>
    <property type="match status" value="1"/>
</dbReference>
<dbReference type="Pfam" id="PF01541">
    <property type="entry name" value="GIY-YIG"/>
    <property type="match status" value="1"/>
</dbReference>
<dbReference type="SUPFAM" id="SSF82771">
    <property type="entry name" value="GIY-YIG endonuclease"/>
    <property type="match status" value="1"/>
</dbReference>
<dbReference type="PROSITE" id="PS50164">
    <property type="entry name" value="GIY_YIG"/>
    <property type="match status" value="1"/>
</dbReference>
<proteinExistence type="inferred from homology"/>
<evidence type="ECO:0000255" key="1">
    <source>
        <dbReference type="PROSITE-ProRule" id="PRU00977"/>
    </source>
</evidence>
<evidence type="ECO:0000305" key="2"/>
<gene>
    <name type="ordered locus">PA14_14150</name>
</gene>
<protein>
    <recommendedName>
        <fullName>UPF0213 protein PA14_14150</fullName>
    </recommendedName>
</protein>
<organism>
    <name type="scientific">Pseudomonas aeruginosa (strain UCBPP-PA14)</name>
    <dbReference type="NCBI Taxonomy" id="208963"/>
    <lineage>
        <taxon>Bacteria</taxon>
        <taxon>Pseudomonadati</taxon>
        <taxon>Pseudomonadota</taxon>
        <taxon>Gammaproteobacteria</taxon>
        <taxon>Pseudomonadales</taxon>
        <taxon>Pseudomonadaceae</taxon>
        <taxon>Pseudomonas</taxon>
    </lineage>
</organism>
<feature type="chain" id="PRO_1000063679" description="UPF0213 protein PA14_14150">
    <location>
        <begin position="1"/>
        <end position="104"/>
    </location>
</feature>
<feature type="domain" description="GIY-YIG" evidence="1">
    <location>
        <begin position="13"/>
        <end position="88"/>
    </location>
</feature>
<reference key="1">
    <citation type="journal article" date="2006" name="Genome Biol.">
        <title>Genomic analysis reveals that Pseudomonas aeruginosa virulence is combinatorial.</title>
        <authorList>
            <person name="Lee D.G."/>
            <person name="Urbach J.M."/>
            <person name="Wu G."/>
            <person name="Liberati N.T."/>
            <person name="Feinbaum R.L."/>
            <person name="Miyata S."/>
            <person name="Diggins L.T."/>
            <person name="He J."/>
            <person name="Saucier M."/>
            <person name="Deziel E."/>
            <person name="Friedman L."/>
            <person name="Li L."/>
            <person name="Grills G."/>
            <person name="Montgomery K."/>
            <person name="Kucherlapati R."/>
            <person name="Rahme L.G."/>
            <person name="Ausubel F.M."/>
        </authorList>
    </citation>
    <scope>NUCLEOTIDE SEQUENCE [LARGE SCALE GENOMIC DNA]</scope>
    <source>
        <strain>UCBPP-PA14</strain>
    </source>
</reference>
<accession>Q02S14</accession>